<organism>
    <name type="scientific">Dictyostelium discoideum</name>
    <name type="common">Social amoeba</name>
    <dbReference type="NCBI Taxonomy" id="44689"/>
    <lineage>
        <taxon>Eukaryota</taxon>
        <taxon>Amoebozoa</taxon>
        <taxon>Evosea</taxon>
        <taxon>Eumycetozoa</taxon>
        <taxon>Dictyostelia</taxon>
        <taxon>Dictyosteliales</taxon>
        <taxon>Dictyosteliaceae</taxon>
        <taxon>Dictyostelium</taxon>
    </lineage>
</organism>
<reference key="1">
    <citation type="journal article" date="2003" name="J. Biol. Chem.">
        <title>Macroautophagy is required for multicellular development of the social amoeba Dictyostelium discoideum.</title>
        <authorList>
            <person name="Otto G.P."/>
            <person name="Wu M.Y."/>
            <person name="Kazgan N."/>
            <person name="Anderson O.R."/>
            <person name="Kessin R.H."/>
        </authorList>
    </citation>
    <scope>NUCLEOTIDE SEQUENCE [GENOMIC DNA]</scope>
    <scope>FUNCTION</scope>
    <source>
        <strain>AX3 / DH1</strain>
    </source>
</reference>
<reference key="2">
    <citation type="journal article" date="2005" name="Nature">
        <title>The genome of the social amoeba Dictyostelium discoideum.</title>
        <authorList>
            <person name="Eichinger L."/>
            <person name="Pachebat J.A."/>
            <person name="Gloeckner G."/>
            <person name="Rajandream M.A."/>
            <person name="Sucgang R."/>
            <person name="Berriman M."/>
            <person name="Song J."/>
            <person name="Olsen R."/>
            <person name="Szafranski K."/>
            <person name="Xu Q."/>
            <person name="Tunggal B."/>
            <person name="Kummerfeld S."/>
            <person name="Madera M."/>
            <person name="Konfortov B.A."/>
            <person name="Rivero F."/>
            <person name="Bankier A.T."/>
            <person name="Lehmann R."/>
            <person name="Hamlin N."/>
            <person name="Davies R."/>
            <person name="Gaudet P."/>
            <person name="Fey P."/>
            <person name="Pilcher K."/>
            <person name="Chen G."/>
            <person name="Saunders D."/>
            <person name="Sodergren E.J."/>
            <person name="Davis P."/>
            <person name="Kerhornou A."/>
            <person name="Nie X."/>
            <person name="Hall N."/>
            <person name="Anjard C."/>
            <person name="Hemphill L."/>
            <person name="Bason N."/>
            <person name="Farbrother P."/>
            <person name="Desany B."/>
            <person name="Just E."/>
            <person name="Morio T."/>
            <person name="Rost R."/>
            <person name="Churcher C.M."/>
            <person name="Cooper J."/>
            <person name="Haydock S."/>
            <person name="van Driessche N."/>
            <person name="Cronin A."/>
            <person name="Goodhead I."/>
            <person name="Muzny D.M."/>
            <person name="Mourier T."/>
            <person name="Pain A."/>
            <person name="Lu M."/>
            <person name="Harper D."/>
            <person name="Lindsay R."/>
            <person name="Hauser H."/>
            <person name="James K.D."/>
            <person name="Quiles M."/>
            <person name="Madan Babu M."/>
            <person name="Saito T."/>
            <person name="Buchrieser C."/>
            <person name="Wardroper A."/>
            <person name="Felder M."/>
            <person name="Thangavelu M."/>
            <person name="Johnson D."/>
            <person name="Knights A."/>
            <person name="Loulseged H."/>
            <person name="Mungall K.L."/>
            <person name="Oliver K."/>
            <person name="Price C."/>
            <person name="Quail M.A."/>
            <person name="Urushihara H."/>
            <person name="Hernandez J."/>
            <person name="Rabbinowitsch E."/>
            <person name="Steffen D."/>
            <person name="Sanders M."/>
            <person name="Ma J."/>
            <person name="Kohara Y."/>
            <person name="Sharp S."/>
            <person name="Simmonds M.N."/>
            <person name="Spiegler S."/>
            <person name="Tivey A."/>
            <person name="Sugano S."/>
            <person name="White B."/>
            <person name="Walker D."/>
            <person name="Woodward J.R."/>
            <person name="Winckler T."/>
            <person name="Tanaka Y."/>
            <person name="Shaulsky G."/>
            <person name="Schleicher M."/>
            <person name="Weinstock G.M."/>
            <person name="Rosenthal A."/>
            <person name="Cox E.C."/>
            <person name="Chisholm R.L."/>
            <person name="Gibbs R.A."/>
            <person name="Loomis W.F."/>
            <person name="Platzer M."/>
            <person name="Kay R.R."/>
            <person name="Williams J.G."/>
            <person name="Dear P.H."/>
            <person name="Noegel A.A."/>
            <person name="Barrell B.G."/>
            <person name="Kuspa A."/>
        </authorList>
    </citation>
    <scope>NUCLEOTIDE SEQUENCE [LARGE SCALE GENOMIC DNA]</scope>
    <source>
        <strain>AX4</strain>
    </source>
</reference>
<reference key="3">
    <citation type="journal article" date="2004" name="J. Biol. Chem.">
        <title>Autophagy gene disruption reveals a non-vacuolar cell death pathway in Dictyostelium.</title>
        <authorList>
            <person name="Kosta A."/>
            <person name="Roisin-Bouffay C."/>
            <person name="Luciani M.-F."/>
            <person name="Otto G.P."/>
            <person name="Kessin R.H."/>
            <person name="Golstein P."/>
        </authorList>
    </citation>
    <scope>FUNCTION</scope>
</reference>
<reference key="4">
    <citation type="journal article" date="2007" name="Cell Death Differ.">
        <title>A necrotic cell death model in a protist.</title>
        <authorList>
            <person name="Laporte C."/>
            <person name="Kosta A."/>
            <person name="Klein G."/>
            <person name="Aubry L."/>
            <person name="Lam D."/>
            <person name="Tresse E."/>
            <person name="Luciani M.F."/>
            <person name="Golstein P."/>
        </authorList>
    </citation>
    <scope>FUNCTION</scope>
</reference>
<reference key="5">
    <citation type="journal article" date="2007" name="Proteins">
        <title>Classification and functional annotation of eukaryotic protein kinases.</title>
        <authorList>
            <person name="Miranda-Saavedra D."/>
            <person name="Barton G.J."/>
        </authorList>
    </citation>
    <scope>FUNCTION</scope>
</reference>
<reference key="6">
    <citation type="journal article" date="2009" name="Proc. Natl. Acad. Sci. U.S.A.">
        <title>Autophagy genes protect against Salmonella typhimurium infection and mediate insulin signaling-regulated pathogen resistance.</title>
        <authorList>
            <person name="Jia K."/>
            <person name="Thomas C."/>
            <person name="Akbar M."/>
            <person name="Sun Q."/>
            <person name="Adams-Huet B."/>
            <person name="Gilpin C."/>
            <person name="Levine B."/>
        </authorList>
    </citation>
    <scope>FUNCTION</scope>
    <scope>DISRUPTION PHENOTYPE</scope>
</reference>
<keyword id="KW-0067">ATP-binding</keyword>
<keyword id="KW-0072">Autophagy</keyword>
<keyword id="KW-0963">Cytoplasm</keyword>
<keyword id="KW-0418">Kinase</keyword>
<keyword id="KW-0472">Membrane</keyword>
<keyword id="KW-0547">Nucleotide-binding</keyword>
<keyword id="KW-0653">Protein transport</keyword>
<keyword id="KW-1185">Reference proteome</keyword>
<keyword id="KW-0723">Serine/threonine-protein kinase</keyword>
<keyword id="KW-0808">Transferase</keyword>
<keyword id="KW-0813">Transport</keyword>
<evidence type="ECO:0000250" key="1">
    <source>
        <dbReference type="UniProtKB" id="P53104"/>
    </source>
</evidence>
<evidence type="ECO:0000255" key="2">
    <source>
        <dbReference type="PROSITE-ProRule" id="PRU00159"/>
    </source>
</evidence>
<evidence type="ECO:0000255" key="3">
    <source>
        <dbReference type="PROSITE-ProRule" id="PRU10027"/>
    </source>
</evidence>
<evidence type="ECO:0000256" key="4">
    <source>
        <dbReference type="SAM" id="MobiDB-lite"/>
    </source>
</evidence>
<evidence type="ECO:0000269" key="5">
    <source>
    </source>
</evidence>
<evidence type="ECO:0000269" key="6">
    <source>
    </source>
</evidence>
<evidence type="ECO:0000269" key="7">
    <source>
    </source>
</evidence>
<evidence type="ECO:0000269" key="8">
    <source>
    </source>
</evidence>
<evidence type="ECO:0000269" key="9">
    <source>
    </source>
</evidence>
<proteinExistence type="inferred from homology"/>
<protein>
    <recommendedName>
        <fullName evidence="1">Serine/threonine-protein kinase atg1</fullName>
        <ecNumber evidence="1">2.7.11.1</ecNumber>
    </recommendedName>
    <alternativeName>
        <fullName evidence="1">Autophagy-related protein 1</fullName>
    </alternativeName>
</protein>
<comment type="function">
    <text evidence="5 6 7 8 9">Serine/threonine protein kinase involved in autophagy (PubMed:12626495, PubMed:17557329). Involved in the control of autophagic vacuolar cell death (PubMed:15358773, PubMed:16810325). Required for normal survival when exposed to pathogenic bacteria S.typhimurium by promoting autophagic degradation of intracellular S.typhimurium (PubMed:19667176).</text>
</comment>
<comment type="catalytic activity">
    <reaction evidence="1">
        <text>L-seryl-[protein] + ATP = O-phospho-L-seryl-[protein] + ADP + H(+)</text>
        <dbReference type="Rhea" id="RHEA:17989"/>
        <dbReference type="Rhea" id="RHEA-COMP:9863"/>
        <dbReference type="Rhea" id="RHEA-COMP:11604"/>
        <dbReference type="ChEBI" id="CHEBI:15378"/>
        <dbReference type="ChEBI" id="CHEBI:29999"/>
        <dbReference type="ChEBI" id="CHEBI:30616"/>
        <dbReference type="ChEBI" id="CHEBI:83421"/>
        <dbReference type="ChEBI" id="CHEBI:456216"/>
        <dbReference type="EC" id="2.7.11.1"/>
    </reaction>
</comment>
<comment type="catalytic activity">
    <reaction evidence="1">
        <text>L-threonyl-[protein] + ATP = O-phospho-L-threonyl-[protein] + ADP + H(+)</text>
        <dbReference type="Rhea" id="RHEA:46608"/>
        <dbReference type="Rhea" id="RHEA-COMP:11060"/>
        <dbReference type="Rhea" id="RHEA-COMP:11605"/>
        <dbReference type="ChEBI" id="CHEBI:15378"/>
        <dbReference type="ChEBI" id="CHEBI:30013"/>
        <dbReference type="ChEBI" id="CHEBI:30616"/>
        <dbReference type="ChEBI" id="CHEBI:61977"/>
        <dbReference type="ChEBI" id="CHEBI:456216"/>
        <dbReference type="EC" id="2.7.11.1"/>
    </reaction>
</comment>
<comment type="subunit">
    <text evidence="1">Homodimer. Forms a ternary complex with ATG13 and ATG17.</text>
</comment>
<comment type="subcellular location">
    <subcellularLocation>
        <location evidence="1">Cytoplasm</location>
    </subcellularLocation>
    <subcellularLocation>
        <location evidence="1">Preautophagosomal structure membrane</location>
        <topology evidence="1">Peripheral membrane protein</topology>
    </subcellularLocation>
</comment>
<comment type="disruption phenotype">
    <text evidence="9">Impaired survival when exposed to pathogenic bacteria S.typhimurium associated with the accumulation of S.typhimuriumin in large vacuoles which fail to undergo autophagy.</text>
</comment>
<comment type="similarity">
    <text evidence="2">Belongs to the protein kinase superfamily. Ser/Thr protein kinase family. APG1/unc-51/ULK1 subfamily.</text>
</comment>
<gene>
    <name type="primary">atg1</name>
    <name type="synonym">apg1</name>
    <name type="ORF">DDB_G0292390</name>
</gene>
<sequence length="668" mass="77175">MKRVGDYILDKRIGWGAFAQVYKGFSIKTNEPFAIKVVDVCRLADKNSKLTENLNYEIRILKELSHTNIVRLYDVLNEETDPTFIYMIMECCEGGDFSKYIRTHKKLTEEKALYFMKQLANGLKFLRQKQIVHRDLKPQNLLLSDDSEHPILKIGDFGFAKFIDPFSLSDTFCGSPLYMAPEILHRKNYTVKADLWSVGIILYEMLVGEPAYNSGSVPDLLNQLQNKKIKLPSHISSDCQNLIYSLLQIDVEKRISWEDFFNHKWLNLNNNDSYKNNSGNYFNNNNINNNNNNNTNNNNNNISYPISINSNNTNNNNNNNNNNNNNNNNNNNNNNNNNNNNNNNNNNNYYNNNNSPPNVYHASSLPYDFNNNNNNNNSNNYNNNTNVPNSLPFAYNNNIYSSPTEAIPQPTTLNKSKSLENTGNTIRAHPFKDDKKSTTIQQPQQQQQQQQQQQQQQQQQQQQQQQQQQQNRQLSNLSTDFERDLVILDGEELESMERVFNRAVAIAELGDLRQNEPLECVPLYILALKLMKSKIPNDPSSSPDKFINTFTEYKRKLVHIFSTSNTSVKNQDHHSSFSPNRFIYENALEFGKKGAVEELYNNYPTSLQFYTDGTLLLEYLSSIVIDSDDQEIIKKYLNAFEVRTQICKKNYENSKNTVLNTNSIQNNT</sequence>
<accession>Q86CS2</accession>
<accession>Q54D55</accession>
<feature type="chain" id="PRO_0000327584" description="Serine/threonine-protein kinase atg1">
    <location>
        <begin position="1"/>
        <end position="668"/>
    </location>
</feature>
<feature type="domain" description="Protein kinase" evidence="2">
    <location>
        <begin position="7"/>
        <end position="266"/>
    </location>
</feature>
<feature type="region of interest" description="Disordered" evidence="4">
    <location>
        <begin position="281"/>
        <end position="389"/>
    </location>
</feature>
<feature type="region of interest" description="Disordered" evidence="4">
    <location>
        <begin position="402"/>
        <end position="447"/>
    </location>
</feature>
<feature type="compositionally biased region" description="Low complexity" evidence="4">
    <location>
        <begin position="281"/>
        <end position="354"/>
    </location>
</feature>
<feature type="compositionally biased region" description="Low complexity" evidence="4">
    <location>
        <begin position="370"/>
        <end position="389"/>
    </location>
</feature>
<feature type="compositionally biased region" description="Polar residues" evidence="4">
    <location>
        <begin position="402"/>
        <end position="425"/>
    </location>
</feature>
<feature type="active site" description="Proton acceptor" evidence="2 3">
    <location>
        <position position="135"/>
    </location>
</feature>
<feature type="binding site" evidence="2">
    <location>
        <begin position="13"/>
        <end position="21"/>
    </location>
    <ligand>
        <name>ATP</name>
        <dbReference type="ChEBI" id="CHEBI:30616"/>
    </ligand>
</feature>
<feature type="binding site" evidence="2">
    <location>
        <position position="36"/>
    </location>
    <ligand>
        <name>ATP</name>
        <dbReference type="ChEBI" id="CHEBI:30616"/>
    </ligand>
</feature>
<name>ATG1_DICDI</name>
<dbReference type="EC" id="2.7.11.1" evidence="1"/>
<dbReference type="EMBL" id="AY191011">
    <property type="protein sequence ID" value="AAO39074.1"/>
    <property type="molecule type" value="Genomic_DNA"/>
</dbReference>
<dbReference type="EMBL" id="AAFI02000190">
    <property type="protein sequence ID" value="EAL61174.1"/>
    <property type="molecule type" value="Genomic_DNA"/>
</dbReference>
<dbReference type="RefSeq" id="XP_629641.1">
    <property type="nucleotide sequence ID" value="XM_629639.1"/>
</dbReference>
<dbReference type="SMR" id="Q86CS2"/>
<dbReference type="FunCoup" id="Q86CS2">
    <property type="interactions" value="1"/>
</dbReference>
<dbReference type="STRING" id="44689.Q86CS2"/>
<dbReference type="PaxDb" id="44689-DDB0185178"/>
<dbReference type="EnsemblProtists" id="EAL61174">
    <property type="protein sequence ID" value="EAL61174"/>
    <property type="gene ID" value="DDB_G0292390"/>
</dbReference>
<dbReference type="GeneID" id="8628705"/>
<dbReference type="KEGG" id="ddi:DDB_G0292390"/>
<dbReference type="dictyBase" id="DDB_G0292390">
    <property type="gene designation" value="atg1"/>
</dbReference>
<dbReference type="VEuPathDB" id="AmoebaDB:DDB_G0292390"/>
<dbReference type="eggNOG" id="KOG0595">
    <property type="taxonomic scope" value="Eukaryota"/>
</dbReference>
<dbReference type="HOGENOM" id="CLU_411314_0_0_1"/>
<dbReference type="InParanoid" id="Q86CS2"/>
<dbReference type="OMA" id="CCEGGDF"/>
<dbReference type="Reactome" id="R-DDI-1632852">
    <property type="pathway name" value="Macroautophagy"/>
</dbReference>
<dbReference type="Reactome" id="R-DDI-8854214">
    <property type="pathway name" value="TBC/RABGAPs"/>
</dbReference>
<dbReference type="Reactome" id="R-DDI-8876198">
    <property type="pathway name" value="RAB GEFs exchange GTP for GDP on RABs"/>
</dbReference>
<dbReference type="Reactome" id="R-DDI-8934903">
    <property type="pathway name" value="Receptor Mediated Mitophagy"/>
</dbReference>
<dbReference type="PRO" id="PR:Q86CS2"/>
<dbReference type="Proteomes" id="UP000002195">
    <property type="component" value="Chromosome 6"/>
</dbReference>
<dbReference type="GO" id="GO:1990316">
    <property type="term" value="C:Atg1/ULK1 kinase complex"/>
    <property type="evidence" value="ECO:0000314"/>
    <property type="project" value="dictyBase"/>
</dbReference>
<dbReference type="GO" id="GO:0005776">
    <property type="term" value="C:autophagosome"/>
    <property type="evidence" value="ECO:0000318"/>
    <property type="project" value="GO_Central"/>
</dbReference>
<dbReference type="GO" id="GO:0005737">
    <property type="term" value="C:cytoplasm"/>
    <property type="evidence" value="ECO:0000314"/>
    <property type="project" value="dictyBase"/>
</dbReference>
<dbReference type="GO" id="GO:0005829">
    <property type="term" value="C:cytosol"/>
    <property type="evidence" value="ECO:0000318"/>
    <property type="project" value="GO_Central"/>
</dbReference>
<dbReference type="GO" id="GO:0000407">
    <property type="term" value="C:phagophore assembly site"/>
    <property type="evidence" value="ECO:0000318"/>
    <property type="project" value="GO_Central"/>
</dbReference>
<dbReference type="GO" id="GO:0034045">
    <property type="term" value="C:phagophore assembly site membrane"/>
    <property type="evidence" value="ECO:0000318"/>
    <property type="project" value="GO_Central"/>
</dbReference>
<dbReference type="GO" id="GO:0005524">
    <property type="term" value="F:ATP binding"/>
    <property type="evidence" value="ECO:0007669"/>
    <property type="project" value="UniProtKB-KW"/>
</dbReference>
<dbReference type="GO" id="GO:0008047">
    <property type="term" value="F:enzyme activator activity"/>
    <property type="evidence" value="ECO:0000314"/>
    <property type="project" value="dictyBase"/>
</dbReference>
<dbReference type="GO" id="GO:0004672">
    <property type="term" value="F:protein kinase activity"/>
    <property type="evidence" value="ECO:0000314"/>
    <property type="project" value="dictyBase"/>
</dbReference>
<dbReference type="GO" id="GO:0106310">
    <property type="term" value="F:protein serine kinase activity"/>
    <property type="evidence" value="ECO:0007669"/>
    <property type="project" value="RHEA"/>
</dbReference>
<dbReference type="GO" id="GO:0004674">
    <property type="term" value="F:protein serine/threonine kinase activity"/>
    <property type="evidence" value="ECO:0000250"/>
    <property type="project" value="dictyBase"/>
</dbReference>
<dbReference type="GO" id="GO:0031152">
    <property type="term" value="P:aggregation involved in sorocarp development"/>
    <property type="evidence" value="ECO:0000315"/>
    <property type="project" value="dictyBase"/>
</dbReference>
<dbReference type="GO" id="GO:0048102">
    <property type="term" value="P:autophagic cell death"/>
    <property type="evidence" value="ECO:0000315"/>
    <property type="project" value="dictyBase"/>
</dbReference>
<dbReference type="GO" id="GO:0000045">
    <property type="term" value="P:autophagosome assembly"/>
    <property type="evidence" value="ECO:0000318"/>
    <property type="project" value="GO_Central"/>
</dbReference>
<dbReference type="GO" id="GO:1905037">
    <property type="term" value="P:autophagosome organization"/>
    <property type="evidence" value="ECO:0000315"/>
    <property type="project" value="dictyBase"/>
</dbReference>
<dbReference type="GO" id="GO:0000902">
    <property type="term" value="P:cell morphogenesis"/>
    <property type="evidence" value="ECO:0000315"/>
    <property type="project" value="dictyBase"/>
</dbReference>
<dbReference type="GO" id="GO:0006995">
    <property type="term" value="P:cellular response to nitrogen starvation"/>
    <property type="evidence" value="ECO:0000315"/>
    <property type="project" value="dictyBase"/>
</dbReference>
<dbReference type="GO" id="GO:0009267">
    <property type="term" value="P:cellular response to starvation"/>
    <property type="evidence" value="ECO:0000314"/>
    <property type="project" value="dictyBase"/>
</dbReference>
<dbReference type="GO" id="GO:0043327">
    <property type="term" value="P:chemotaxis to cAMP"/>
    <property type="evidence" value="ECO:0000315"/>
    <property type="project" value="dictyBase"/>
</dbReference>
<dbReference type="GO" id="GO:0042742">
    <property type="term" value="P:defense response to bacterium"/>
    <property type="evidence" value="ECO:0000315"/>
    <property type="project" value="dictyBase"/>
</dbReference>
<dbReference type="GO" id="GO:0050830">
    <property type="term" value="P:defense response to Gram-positive bacterium"/>
    <property type="evidence" value="ECO:0000314"/>
    <property type="project" value="dictyBase"/>
</dbReference>
<dbReference type="GO" id="GO:0035891">
    <property type="term" value="P:exit from host cell"/>
    <property type="evidence" value="ECO:0000315"/>
    <property type="project" value="dictyBase"/>
</dbReference>
<dbReference type="GO" id="GO:0016236">
    <property type="term" value="P:macroautophagy"/>
    <property type="evidence" value="ECO:0000315"/>
    <property type="project" value="dictyBase"/>
</dbReference>
<dbReference type="GO" id="GO:0044351">
    <property type="term" value="P:macropinocytosis"/>
    <property type="evidence" value="ECO:0000314"/>
    <property type="project" value="dictyBase"/>
</dbReference>
<dbReference type="GO" id="GO:0043653">
    <property type="term" value="P:mitochondrial fragmentation involved in apoptotic process"/>
    <property type="evidence" value="ECO:0000314"/>
    <property type="project" value="dictyBase"/>
</dbReference>
<dbReference type="GO" id="GO:0000423">
    <property type="term" value="P:mitophagy"/>
    <property type="evidence" value="ECO:0000318"/>
    <property type="project" value="GO_Central"/>
</dbReference>
<dbReference type="GO" id="GO:0010629">
    <property type="term" value="P:negative regulation of gene expression"/>
    <property type="evidence" value="ECO:0000314"/>
    <property type="project" value="dictyBase"/>
</dbReference>
<dbReference type="GO" id="GO:0034727">
    <property type="term" value="P:piecemeal microautophagy of the nucleus"/>
    <property type="evidence" value="ECO:0000318"/>
    <property type="project" value="GO_Central"/>
</dbReference>
<dbReference type="GO" id="GO:0097300">
    <property type="term" value="P:programmed necrotic cell death"/>
    <property type="evidence" value="ECO:0000314"/>
    <property type="project" value="dictyBase"/>
</dbReference>
<dbReference type="GO" id="GO:0071692">
    <property type="term" value="P:protein localization to extracellular region"/>
    <property type="evidence" value="ECO:0000315"/>
    <property type="project" value="dictyBase"/>
</dbReference>
<dbReference type="GO" id="GO:0015031">
    <property type="term" value="P:protein transport"/>
    <property type="evidence" value="ECO:0007669"/>
    <property type="project" value="UniProtKB-KW"/>
</dbReference>
<dbReference type="GO" id="GO:0010506">
    <property type="term" value="P:regulation of autophagy"/>
    <property type="evidence" value="ECO:0000318"/>
    <property type="project" value="GO_Central"/>
</dbReference>
<dbReference type="GO" id="GO:0043457">
    <property type="term" value="P:regulation of cellular respiration"/>
    <property type="evidence" value="ECO:0000314"/>
    <property type="project" value="dictyBase"/>
</dbReference>
<dbReference type="GO" id="GO:0048548">
    <property type="term" value="P:regulation of pinocytosis"/>
    <property type="evidence" value="ECO:0000315"/>
    <property type="project" value="dictyBase"/>
</dbReference>
<dbReference type="GO" id="GO:0009617">
    <property type="term" value="P:response to bacterium"/>
    <property type="evidence" value="ECO:0000315"/>
    <property type="project" value="dictyBase"/>
</dbReference>
<dbReference type="GO" id="GO:0042594">
    <property type="term" value="P:response to starvation"/>
    <property type="evidence" value="ECO:0000318"/>
    <property type="project" value="GO_Central"/>
</dbReference>
<dbReference type="GO" id="GO:0001878">
    <property type="term" value="P:response to yeast"/>
    <property type="evidence" value="ECO:0000315"/>
    <property type="project" value="dictyBase"/>
</dbReference>
<dbReference type="GO" id="GO:0061709">
    <property type="term" value="P:reticulophagy"/>
    <property type="evidence" value="ECO:0000318"/>
    <property type="project" value="GO_Central"/>
</dbReference>
<dbReference type="GO" id="GO:0030587">
    <property type="term" value="P:sorocarp development"/>
    <property type="evidence" value="ECO:0000314"/>
    <property type="project" value="dictyBase"/>
</dbReference>
<dbReference type="GO" id="GO:0031288">
    <property type="term" value="P:sorocarp morphogenesis"/>
    <property type="evidence" value="ECO:0000315"/>
    <property type="project" value="dictyBase"/>
</dbReference>
<dbReference type="GO" id="GO:0030435">
    <property type="term" value="P:sporulation resulting in formation of a cellular spore"/>
    <property type="evidence" value="ECO:0000315"/>
    <property type="project" value="dictyBase"/>
</dbReference>
<dbReference type="CDD" id="cd14009">
    <property type="entry name" value="STKc_ATG1_ULK_like"/>
    <property type="match status" value="1"/>
</dbReference>
<dbReference type="FunFam" id="1.10.510.10:FF:001412">
    <property type="entry name" value="Serine/threonine-protein kinase atg1"/>
    <property type="match status" value="1"/>
</dbReference>
<dbReference type="Gene3D" id="1.10.510.10">
    <property type="entry name" value="Transferase(Phosphotransferase) domain 1"/>
    <property type="match status" value="1"/>
</dbReference>
<dbReference type="InterPro" id="IPR045269">
    <property type="entry name" value="Atg1-like"/>
</dbReference>
<dbReference type="InterPro" id="IPR011009">
    <property type="entry name" value="Kinase-like_dom_sf"/>
</dbReference>
<dbReference type="InterPro" id="IPR000719">
    <property type="entry name" value="Prot_kinase_dom"/>
</dbReference>
<dbReference type="InterPro" id="IPR017441">
    <property type="entry name" value="Protein_kinase_ATP_BS"/>
</dbReference>
<dbReference type="InterPro" id="IPR008271">
    <property type="entry name" value="Ser/Thr_kinase_AS"/>
</dbReference>
<dbReference type="PANTHER" id="PTHR24348:SF22">
    <property type="entry name" value="NON-SPECIFIC SERINE_THREONINE PROTEIN KINASE"/>
    <property type="match status" value="1"/>
</dbReference>
<dbReference type="PANTHER" id="PTHR24348">
    <property type="entry name" value="SERINE/THREONINE-PROTEIN KINASE UNC-51-RELATED"/>
    <property type="match status" value="1"/>
</dbReference>
<dbReference type="Pfam" id="PF00069">
    <property type="entry name" value="Pkinase"/>
    <property type="match status" value="1"/>
</dbReference>
<dbReference type="SMART" id="SM00220">
    <property type="entry name" value="S_TKc"/>
    <property type="match status" value="1"/>
</dbReference>
<dbReference type="SUPFAM" id="SSF56112">
    <property type="entry name" value="Protein kinase-like (PK-like)"/>
    <property type="match status" value="1"/>
</dbReference>
<dbReference type="PROSITE" id="PS00107">
    <property type="entry name" value="PROTEIN_KINASE_ATP"/>
    <property type="match status" value="1"/>
</dbReference>
<dbReference type="PROSITE" id="PS50011">
    <property type="entry name" value="PROTEIN_KINASE_DOM"/>
    <property type="match status" value="1"/>
</dbReference>
<dbReference type="PROSITE" id="PS00108">
    <property type="entry name" value="PROTEIN_KINASE_ST"/>
    <property type="match status" value="1"/>
</dbReference>